<dbReference type="EMBL" id="AY647533">
    <property type="protein sequence ID" value="AAT65675.1"/>
    <property type="molecule type" value="Genomic_DNA"/>
</dbReference>
<dbReference type="GO" id="GO:0009507">
    <property type="term" value="C:chloroplast"/>
    <property type="evidence" value="ECO:0007669"/>
    <property type="project" value="UniProtKB-SubCell"/>
</dbReference>
<dbReference type="GO" id="GO:0003723">
    <property type="term" value="F:RNA binding"/>
    <property type="evidence" value="ECO:0007669"/>
    <property type="project" value="UniProtKB-KW"/>
</dbReference>
<dbReference type="GO" id="GO:0006397">
    <property type="term" value="P:mRNA processing"/>
    <property type="evidence" value="ECO:0007669"/>
    <property type="project" value="UniProtKB-KW"/>
</dbReference>
<dbReference type="GO" id="GO:0008380">
    <property type="term" value="P:RNA splicing"/>
    <property type="evidence" value="ECO:0007669"/>
    <property type="project" value="UniProtKB-UniRule"/>
</dbReference>
<dbReference type="GO" id="GO:0008033">
    <property type="term" value="P:tRNA processing"/>
    <property type="evidence" value="ECO:0007669"/>
    <property type="project" value="UniProtKB-KW"/>
</dbReference>
<dbReference type="HAMAP" id="MF_01390">
    <property type="entry name" value="MatK"/>
    <property type="match status" value="1"/>
</dbReference>
<dbReference type="InterPro" id="IPR024937">
    <property type="entry name" value="Domain_X"/>
</dbReference>
<dbReference type="InterPro" id="IPR002866">
    <property type="entry name" value="Maturase_MatK"/>
</dbReference>
<dbReference type="InterPro" id="IPR024942">
    <property type="entry name" value="Maturase_MatK_N"/>
</dbReference>
<dbReference type="PANTHER" id="PTHR34811">
    <property type="entry name" value="MATURASE K"/>
    <property type="match status" value="1"/>
</dbReference>
<dbReference type="PANTHER" id="PTHR34811:SF1">
    <property type="entry name" value="MATURASE K"/>
    <property type="match status" value="1"/>
</dbReference>
<dbReference type="Pfam" id="PF01348">
    <property type="entry name" value="Intron_maturas2"/>
    <property type="match status" value="1"/>
</dbReference>
<dbReference type="Pfam" id="PF01824">
    <property type="entry name" value="MatK_N"/>
    <property type="match status" value="1"/>
</dbReference>
<reference key="1">
    <citation type="journal article" date="2004" name="Am. J. Bot.">
        <title>Buzz-pollinated Dodecatheon originated from within the heterostylous Primula subgenus Auriculastrum (Primulaceae): a seven-region cpDNA phylogeny and its implications for floral evolution.</title>
        <authorList>
            <person name="Mast A.R."/>
            <person name="Feller D.M.S."/>
            <person name="Kelso S."/>
            <person name="Conti E."/>
        </authorList>
        <dbReference type="AGRICOLA" id="IND43645016"/>
    </citation>
    <scope>NUCLEOTIDE SEQUENCE [GENOMIC DNA]</scope>
</reference>
<comment type="function">
    <text evidence="1">Usually encoded in the trnK tRNA gene intron. Probably assists in splicing its own and other chloroplast group II introns.</text>
</comment>
<comment type="subcellular location">
    <subcellularLocation>
        <location>Plastid</location>
        <location>Chloroplast</location>
    </subcellularLocation>
</comment>
<comment type="similarity">
    <text evidence="1">Belongs to the intron maturase 2 family. MatK subfamily.</text>
</comment>
<protein>
    <recommendedName>
        <fullName evidence="1">Maturase K</fullName>
    </recommendedName>
    <alternativeName>
        <fullName evidence="1">Intron maturase</fullName>
    </alternativeName>
</protein>
<sequence length="512" mass="60989">MEEFKRYLDLDTSRQHDFLYPLIFQEYIYALAHDHSLTRSNSLELEKAGYDNNSSLLIVKRLITHLITQMDRQNHLSFLTNDSSQNPFFGHNTALYSQIILEGFVVVVEIPFSIRVISSLDLEGKERVKSHNFRSIHSVFPFLEDKFSHLIYVLDLLIPQSIHLEILIQTLRYWVKDASSLHLLRAFLHKYHNWKNLITPKKSSFSFSKRNKRFFFFFYNFHVYEYESILAFICNQSSHLQSKSYRPFLDRIYFYEKRDHFVEVFTKYFQAVLWSFNDPFMHYVRYQGKALLASKGTFLLMNKWNYYLVNFWQCYFYMWSQPGRIHINKLSNHYLELLGYLSSVGLNSSMVRNQMLENAFLIANASKKFDTTVPIIPLIRSFSKAKFCNLLGHPISKPIWTDLSDSDIIDRFGCIYRNISHYYSGSSQKMSLYRIKYIIKLSCARTLARKHKSTVRAFLKRVGLEFLEEFFLEDEFMFSLTFPKASYISGGLYRMRIWYLDIFCIHDLANHK</sequence>
<organism>
    <name type="scientific">Soldanella alpina</name>
    <name type="common">Alpine snowbell</name>
    <dbReference type="NCBI Taxonomy" id="66308"/>
    <lineage>
        <taxon>Eukaryota</taxon>
        <taxon>Viridiplantae</taxon>
        <taxon>Streptophyta</taxon>
        <taxon>Embryophyta</taxon>
        <taxon>Tracheophyta</taxon>
        <taxon>Spermatophyta</taxon>
        <taxon>Magnoliopsida</taxon>
        <taxon>eudicotyledons</taxon>
        <taxon>Gunneridae</taxon>
        <taxon>Pentapetalae</taxon>
        <taxon>asterids</taxon>
        <taxon>Ericales</taxon>
        <taxon>Primulaceae</taxon>
        <taxon>Soldanella</taxon>
    </lineage>
</organism>
<geneLocation type="chloroplast"/>
<name>MATK_SOLAP</name>
<accession>Q6DT84</accession>
<gene>
    <name evidence="1" type="primary">matK</name>
</gene>
<evidence type="ECO:0000255" key="1">
    <source>
        <dbReference type="HAMAP-Rule" id="MF_01390"/>
    </source>
</evidence>
<keyword id="KW-0150">Chloroplast</keyword>
<keyword id="KW-0507">mRNA processing</keyword>
<keyword id="KW-0934">Plastid</keyword>
<keyword id="KW-0694">RNA-binding</keyword>
<keyword id="KW-0819">tRNA processing</keyword>
<feature type="chain" id="PRO_0000143712" description="Maturase K">
    <location>
        <begin position="1"/>
        <end position="512"/>
    </location>
</feature>
<proteinExistence type="inferred from homology"/>